<dbReference type="EMBL" id="X91047">
    <property type="protein sequence ID" value="CAA62510.1"/>
    <property type="molecule type" value="Genomic_DNA"/>
</dbReference>
<dbReference type="PIR" id="JC5755">
    <property type="entry name" value="JC5755"/>
</dbReference>
<dbReference type="SMR" id="Q56827"/>
<dbReference type="GO" id="GO:0009421">
    <property type="term" value="C:bacterial-type flagellum filament cap"/>
    <property type="evidence" value="ECO:0007669"/>
    <property type="project" value="InterPro"/>
</dbReference>
<dbReference type="GO" id="GO:0009424">
    <property type="term" value="C:bacterial-type flagellum hook"/>
    <property type="evidence" value="ECO:0007669"/>
    <property type="project" value="InterPro"/>
</dbReference>
<dbReference type="GO" id="GO:0005576">
    <property type="term" value="C:extracellular region"/>
    <property type="evidence" value="ECO:0007669"/>
    <property type="project" value="UniProtKB-SubCell"/>
</dbReference>
<dbReference type="GO" id="GO:0071973">
    <property type="term" value="P:bacterial-type flagellum-dependent cell motility"/>
    <property type="evidence" value="ECO:0007669"/>
    <property type="project" value="TreeGrafter"/>
</dbReference>
<dbReference type="GO" id="GO:0007155">
    <property type="term" value="P:cell adhesion"/>
    <property type="evidence" value="ECO:0007669"/>
    <property type="project" value="InterPro"/>
</dbReference>
<dbReference type="InterPro" id="IPR010810">
    <property type="entry name" value="Flagellin_hook_IN_motif"/>
</dbReference>
<dbReference type="InterPro" id="IPR040026">
    <property type="entry name" value="FliD"/>
</dbReference>
<dbReference type="InterPro" id="IPR010809">
    <property type="entry name" value="FliD_C"/>
</dbReference>
<dbReference type="InterPro" id="IPR003481">
    <property type="entry name" value="FliD_N"/>
</dbReference>
<dbReference type="NCBIfam" id="NF005955">
    <property type="entry name" value="PRK08032.1"/>
    <property type="match status" value="1"/>
</dbReference>
<dbReference type="PANTHER" id="PTHR30288">
    <property type="entry name" value="FLAGELLAR CAP/ASSEMBLY PROTEIN FLID"/>
    <property type="match status" value="1"/>
</dbReference>
<dbReference type="PANTHER" id="PTHR30288:SF0">
    <property type="entry name" value="FLAGELLAR HOOK-ASSOCIATED PROTEIN 2"/>
    <property type="match status" value="1"/>
</dbReference>
<dbReference type="Pfam" id="PF07196">
    <property type="entry name" value="Flagellin_IN"/>
    <property type="match status" value="1"/>
</dbReference>
<dbReference type="Pfam" id="PF07195">
    <property type="entry name" value="FliD_C"/>
    <property type="match status" value="1"/>
</dbReference>
<dbReference type="Pfam" id="PF02465">
    <property type="entry name" value="FliD_N"/>
    <property type="match status" value="1"/>
</dbReference>
<comment type="function">
    <text evidence="1">Required for the morphogenesis and for the elongation of the flagellar filament by facilitating polymerization of the flagellin monomers at the tip of growing filament. Forms a capping structure, which prevents flagellin subunits (transported through the central channel of the flagellum) from leaking out without polymerization at the distal end (By similarity).</text>
</comment>
<comment type="subunit">
    <text evidence="1">Homopentamer.</text>
</comment>
<comment type="subcellular location">
    <subcellularLocation>
        <location>Secreted</location>
    </subcellularLocation>
    <subcellularLocation>
        <location>Bacterial flagellum</location>
    </subcellularLocation>
</comment>
<comment type="similarity">
    <text evidence="4">Belongs to the FliD family.</text>
</comment>
<protein>
    <recommendedName>
        <fullName>Flagellar hook-associated protein 2</fullName>
        <shortName>HAP2</shortName>
    </recommendedName>
    <alternativeName>
        <fullName>Filament cap protein</fullName>
    </alternativeName>
    <alternativeName>
        <fullName>Flagellar cap protein</fullName>
    </alternativeName>
</protein>
<name>FLID_XENNE</name>
<reference key="1">
    <citation type="journal article" date="1996" name="Gene">
        <title>Cloning and nucleotide sequence of a flagellin encoding genetic locus from Xenorhabdus nematophilus: phase variation leads to differential transcription of two flagellar genes (fliCD).</title>
        <authorList>
            <person name="Givaudan A."/>
            <person name="Lanois A."/>
            <person name="Boemare N."/>
        </authorList>
    </citation>
    <scope>NUCLEOTIDE SEQUENCE [GENOMIC DNA]</scope>
    <source>
        <strain>F1</strain>
    </source>
</reference>
<sequence length="489" mass="53220">MASISSLGAGSGMDLGSLLDKLQAAEKKRLEPLAQQQTSYKAKLTGFGTLKGSLEKLKSASEELKKFDKLNTTKTNGDHKTFTPSTDSKASPGNYEIEVQQLAKAQSLQSTEVSGVKKLLGEQGKGTRTIIITQPGEKEPMKISLKDDETSLVEIRDAINKKEGNVNASIIKADENGTEEEGKSYLILTSKKAGTRSIMTIKVEGDDELGKLLNYTSDGKGGGSGAMTQKVGAANAKLTVNGIPIERQTNEIKDAPEGIILNLKKVSETEEVIVKVNGEDKKIPRPKTEILVVSRDIEPMKEAIKKWVDSYNELQTTFDSLAKFKPVGKGEAASKDNGALLGDGTLKGIQSQLRHQLFAAQDVADIATLNKLGIKQKLDGTLEISDEKLEKNLKEKSADVKAFFMGDGAKPGSTQTYNLLKETLDGHEGTIATATEGINKRLKTLERQVEQTNRNIDATMERYKRQFTELDKLVNSLNNTSSSLFQLLR</sequence>
<gene>
    <name type="primary">fliD</name>
</gene>
<evidence type="ECO:0000250" key="1"/>
<evidence type="ECO:0000255" key="2"/>
<evidence type="ECO:0000256" key="3">
    <source>
        <dbReference type="SAM" id="MobiDB-lite"/>
    </source>
</evidence>
<evidence type="ECO:0000305" key="4"/>
<accession>Q56827</accession>
<organism>
    <name type="scientific">Xenorhabdus nematophila</name>
    <name type="common">Achromobacter nematophilus</name>
    <dbReference type="NCBI Taxonomy" id="628"/>
    <lineage>
        <taxon>Bacteria</taxon>
        <taxon>Pseudomonadati</taxon>
        <taxon>Pseudomonadota</taxon>
        <taxon>Gammaproteobacteria</taxon>
        <taxon>Enterobacterales</taxon>
        <taxon>Morganellaceae</taxon>
        <taxon>Xenorhabdus</taxon>
    </lineage>
</organism>
<keyword id="KW-0975">Bacterial flagellum</keyword>
<keyword id="KW-0175">Coiled coil</keyword>
<keyword id="KW-0964">Secreted</keyword>
<proteinExistence type="inferred from homology"/>
<feature type="initiator methionine" description="Removed" evidence="1">
    <location>
        <position position="1"/>
    </location>
</feature>
<feature type="chain" id="PRO_0000177031" description="Flagellar hook-associated protein 2">
    <location>
        <begin position="2"/>
        <end position="489"/>
    </location>
</feature>
<feature type="region of interest" description="Disordered" evidence="3">
    <location>
        <begin position="70"/>
        <end position="92"/>
    </location>
</feature>
<feature type="coiled-coil region" evidence="2">
    <location>
        <begin position="430"/>
        <end position="480"/>
    </location>
</feature>
<feature type="compositionally biased region" description="Basic and acidic residues" evidence="3">
    <location>
        <begin position="70"/>
        <end position="81"/>
    </location>
</feature>
<feature type="compositionally biased region" description="Polar residues" evidence="3">
    <location>
        <begin position="82"/>
        <end position="91"/>
    </location>
</feature>